<keyword id="KW-0067">ATP-binding</keyword>
<keyword id="KW-0347">Helicase</keyword>
<keyword id="KW-0378">Hydrolase</keyword>
<keyword id="KW-0507">mRNA processing</keyword>
<keyword id="KW-0508">mRNA splicing</keyword>
<keyword id="KW-0547">Nucleotide-binding</keyword>
<keyword id="KW-0539">Nucleus</keyword>
<keyword id="KW-1185">Reference proteome</keyword>
<evidence type="ECO:0000255" key="1">
    <source>
        <dbReference type="PROSITE-ProRule" id="PRU00541"/>
    </source>
</evidence>
<evidence type="ECO:0000255" key="2">
    <source>
        <dbReference type="PROSITE-ProRule" id="PRU00542"/>
    </source>
</evidence>
<evidence type="ECO:0000256" key="3">
    <source>
        <dbReference type="SAM" id="MobiDB-lite"/>
    </source>
</evidence>
<evidence type="ECO:0000269" key="4">
    <source>
    </source>
</evidence>
<evidence type="ECO:0000305" key="5"/>
<evidence type="ECO:0000305" key="6">
    <source>
    </source>
</evidence>
<sequence>MSRRTRSRSPPRRSYNRERRDYRKYDDSEDQKGARYNRYVDDVSSRRDRHDSFRSHESNKIRRDNSWKHDKYSYEKRYQERDREYARSKNIPDQYIGRSPRPTSHRHAEEKEVDNKTKSDETNPVLQGSATEIKPQPRRSRFDRTERVGASLSVSEIQSENPRVDVIPKDKAVENNHQRNAEKPVASDKITDAKLLARLERVRAWKESKAKQEASKKEEHKLNTKPQVTAKDQNAMPSTGISGFEINRQKDTSDMKRNNRVHMDDEDGPRRMNLEDYQELWDQEDRGMLGNEQAASMEEDEVDPLDAYMASLVGTTDTIRPGLLNTEVIDPNANDDERMVISETLEEEENLLALAAKRSKKKDVITVDHSKINYEDFKKDFYVEPEELKNLSPAEVDELRASLDGIKIRGIDCPKPVTSWSQCGLSAQTISVINSLGYEKPTSIQAQAIPAITSGRDVIGVAKTGSGKTIAFLLPMFRHIKDQRPLKTGEGPIAIIMTPTRELAVQIFRECKPFLKLLNIRACCAYGGAPIKDQIADLKRGAEIVVCTPGRMIDVLSANAGRVTNLHRCTYLVLDEADRMFDLGFEPQVMRIINNIRPDRQTVLFSATFPRAMEALARKVLKKPVEITVGGRSVVASEVEQIVEVRPEESKFSRLLELLGELYNNQLDVRTLVFVDRQESADALLSDLMKRGYTSNSIHGGKDQHDRDSTISDYKAGVFDVLIATSVVARGLDVKSLQLVVNYDCPNHMEDYVHRVGRTGRAGHTGVAVTFITPEQEKYAVDIAKALKMSKQPVPKELQTLASQFLEKVKAGKEKAAGGGFGGKGLSRLDETRNAERKMQRKAYGEDEEDVETEAEAKSPLEKITPEKSTGDPTLDRVRAAVGGIAARAFANQTAQSNKLTQPISIIKTDGDEYKAKMEINDYPQQARWAVTNNTNIVHVTELTGTSITTKGNFYLPGKNPEPGEEKLYLWIEGPSELVVNRAITELRRLLLEGINHSLEGGNKPSASGRYTVV</sequence>
<proteinExistence type="evidence at protein level"/>
<protein>
    <recommendedName>
        <fullName>Pre-mRNA-processing ATP-dependent RNA helicase prp11</fullName>
        <ecNumber evidence="6">3.6.4.13</ecNumber>
    </recommendedName>
</protein>
<name>PRP11_SCHPO</name>
<dbReference type="EC" id="3.6.4.13" evidence="6"/>
<dbReference type="EMBL" id="CU329672">
    <property type="protein sequence ID" value="CAB85446.1"/>
    <property type="molecule type" value="Genomic_DNA"/>
</dbReference>
<dbReference type="EMBL" id="AB027964">
    <property type="protein sequence ID" value="BAA87268.1"/>
    <property type="molecule type" value="Genomic_DNA"/>
</dbReference>
<dbReference type="RefSeq" id="NP_587856.1">
    <property type="nucleotide sequence ID" value="NM_001022849.2"/>
</dbReference>
<dbReference type="SMR" id="Q9P7C7"/>
<dbReference type="BioGRID" id="275512">
    <property type="interactions" value="16"/>
</dbReference>
<dbReference type="DIP" id="DIP-59804N"/>
<dbReference type="FunCoup" id="Q9P7C7">
    <property type="interactions" value="1087"/>
</dbReference>
<dbReference type="IntAct" id="Q9P7C7">
    <property type="interactions" value="4"/>
</dbReference>
<dbReference type="STRING" id="284812.Q9P7C7"/>
<dbReference type="iPTMnet" id="Q9P7C7"/>
<dbReference type="PaxDb" id="4896-SPCC10H11.01.1"/>
<dbReference type="EnsemblFungi" id="SPCC10H11.01.1">
    <property type="protein sequence ID" value="SPCC10H11.01.1:pep"/>
    <property type="gene ID" value="SPCC10H11.01"/>
</dbReference>
<dbReference type="GeneID" id="2538936"/>
<dbReference type="KEGG" id="spo:2538936"/>
<dbReference type="PomBase" id="SPCC10H11.01">
    <property type="gene designation" value="prp11"/>
</dbReference>
<dbReference type="VEuPathDB" id="FungiDB:SPCC10H11.01"/>
<dbReference type="eggNOG" id="KOG0334">
    <property type="taxonomic scope" value="Eukaryota"/>
</dbReference>
<dbReference type="HOGENOM" id="CLU_003041_0_1_1"/>
<dbReference type="InParanoid" id="Q9P7C7"/>
<dbReference type="OMA" id="FAQYVHT"/>
<dbReference type="PhylomeDB" id="Q9P7C7"/>
<dbReference type="Reactome" id="R-SPO-72163">
    <property type="pathway name" value="mRNA Splicing - Major Pathway"/>
</dbReference>
<dbReference type="PRO" id="PR:Q9P7C7"/>
<dbReference type="Proteomes" id="UP000002485">
    <property type="component" value="Chromosome III"/>
</dbReference>
<dbReference type="GO" id="GO:0005829">
    <property type="term" value="C:cytosol"/>
    <property type="evidence" value="ECO:0007005"/>
    <property type="project" value="PomBase"/>
</dbReference>
<dbReference type="GO" id="GO:0005634">
    <property type="term" value="C:nucleus"/>
    <property type="evidence" value="ECO:0007005"/>
    <property type="project" value="PomBase"/>
</dbReference>
<dbReference type="GO" id="GO:0071004">
    <property type="term" value="C:U2-type prespliceosome"/>
    <property type="evidence" value="ECO:0000314"/>
    <property type="project" value="PomBase"/>
</dbReference>
<dbReference type="GO" id="GO:0005524">
    <property type="term" value="F:ATP binding"/>
    <property type="evidence" value="ECO:0007669"/>
    <property type="project" value="UniProtKB-KW"/>
</dbReference>
<dbReference type="GO" id="GO:0016887">
    <property type="term" value="F:ATP hydrolysis activity"/>
    <property type="evidence" value="ECO:0000314"/>
    <property type="project" value="PomBase"/>
</dbReference>
<dbReference type="GO" id="GO:0003676">
    <property type="term" value="F:nucleic acid binding"/>
    <property type="evidence" value="ECO:0007669"/>
    <property type="project" value="InterPro"/>
</dbReference>
<dbReference type="GO" id="GO:0003724">
    <property type="term" value="F:RNA helicase activity"/>
    <property type="evidence" value="ECO:0000266"/>
    <property type="project" value="PomBase"/>
</dbReference>
<dbReference type="GO" id="GO:1990446">
    <property type="term" value="F:U1 snRNP binding"/>
    <property type="evidence" value="ECO:0000314"/>
    <property type="project" value="PomBase"/>
</dbReference>
<dbReference type="GO" id="GO:1990447">
    <property type="term" value="F:U2 snRNP binding"/>
    <property type="evidence" value="ECO:0000314"/>
    <property type="project" value="PomBase"/>
</dbReference>
<dbReference type="GO" id="GO:0000398">
    <property type="term" value="P:mRNA splicing, via spliceosome"/>
    <property type="evidence" value="ECO:0000318"/>
    <property type="project" value="GO_Central"/>
</dbReference>
<dbReference type="GO" id="GO:1903241">
    <property type="term" value="P:U2-type prespliceosome assembly"/>
    <property type="evidence" value="ECO:0000315"/>
    <property type="project" value="PomBase"/>
</dbReference>
<dbReference type="CDD" id="cd17953">
    <property type="entry name" value="DEADc_DDX46"/>
    <property type="match status" value="1"/>
</dbReference>
<dbReference type="CDD" id="cd18787">
    <property type="entry name" value="SF2_C_DEAD"/>
    <property type="match status" value="1"/>
</dbReference>
<dbReference type="FunFam" id="3.40.50.300:FF:000079">
    <property type="entry name" value="probable ATP-dependent RNA helicase DDX17"/>
    <property type="match status" value="1"/>
</dbReference>
<dbReference type="Gene3D" id="3.40.50.300">
    <property type="entry name" value="P-loop containing nucleotide triphosphate hydrolases"/>
    <property type="match status" value="2"/>
</dbReference>
<dbReference type="InterPro" id="IPR011545">
    <property type="entry name" value="DEAD/DEAH_box_helicase_dom"/>
</dbReference>
<dbReference type="InterPro" id="IPR014001">
    <property type="entry name" value="Helicase_ATP-bd"/>
</dbReference>
<dbReference type="InterPro" id="IPR001650">
    <property type="entry name" value="Helicase_C-like"/>
</dbReference>
<dbReference type="InterPro" id="IPR027417">
    <property type="entry name" value="P-loop_NTPase"/>
</dbReference>
<dbReference type="InterPro" id="IPR056149">
    <property type="entry name" value="PRP5/DDX46/KHDC4_KH"/>
</dbReference>
<dbReference type="InterPro" id="IPR000629">
    <property type="entry name" value="RNA-helicase_DEAD-box_CS"/>
</dbReference>
<dbReference type="InterPro" id="IPR014014">
    <property type="entry name" value="RNA_helicase_DEAD_Q_motif"/>
</dbReference>
<dbReference type="PANTHER" id="PTHR47958">
    <property type="entry name" value="ATP-DEPENDENT RNA HELICASE DBP3"/>
    <property type="match status" value="1"/>
</dbReference>
<dbReference type="Pfam" id="PF00270">
    <property type="entry name" value="DEAD"/>
    <property type="match status" value="1"/>
</dbReference>
<dbReference type="Pfam" id="PF00271">
    <property type="entry name" value="Helicase_C"/>
    <property type="match status" value="1"/>
</dbReference>
<dbReference type="Pfam" id="PF23469">
    <property type="entry name" value="KH_12"/>
    <property type="match status" value="1"/>
</dbReference>
<dbReference type="SMART" id="SM00487">
    <property type="entry name" value="DEXDc"/>
    <property type="match status" value="1"/>
</dbReference>
<dbReference type="SMART" id="SM00490">
    <property type="entry name" value="HELICc"/>
    <property type="match status" value="1"/>
</dbReference>
<dbReference type="SUPFAM" id="SSF52540">
    <property type="entry name" value="P-loop containing nucleoside triphosphate hydrolases"/>
    <property type="match status" value="2"/>
</dbReference>
<dbReference type="PROSITE" id="PS00039">
    <property type="entry name" value="DEAD_ATP_HELICASE"/>
    <property type="match status" value="1"/>
</dbReference>
<dbReference type="PROSITE" id="PS51192">
    <property type="entry name" value="HELICASE_ATP_BIND_1"/>
    <property type="match status" value="1"/>
</dbReference>
<dbReference type="PROSITE" id="PS51194">
    <property type="entry name" value="HELICASE_CTER"/>
    <property type="match status" value="1"/>
</dbReference>
<dbReference type="PROSITE" id="PS51195">
    <property type="entry name" value="Q_MOTIF"/>
    <property type="match status" value="1"/>
</dbReference>
<reference key="1">
    <citation type="journal article" date="2002" name="Nature">
        <title>The genome sequence of Schizosaccharomyces pombe.</title>
        <authorList>
            <person name="Wood V."/>
            <person name="Gwilliam R."/>
            <person name="Rajandream M.A."/>
            <person name="Lyne M.H."/>
            <person name="Lyne R."/>
            <person name="Stewart A."/>
            <person name="Sgouros J.G."/>
            <person name="Peat N."/>
            <person name="Hayles J."/>
            <person name="Baker S.G."/>
            <person name="Basham D."/>
            <person name="Bowman S."/>
            <person name="Brooks K."/>
            <person name="Brown D."/>
            <person name="Brown S."/>
            <person name="Chillingworth T."/>
            <person name="Churcher C.M."/>
            <person name="Collins M."/>
            <person name="Connor R."/>
            <person name="Cronin A."/>
            <person name="Davis P."/>
            <person name="Feltwell T."/>
            <person name="Fraser A."/>
            <person name="Gentles S."/>
            <person name="Goble A."/>
            <person name="Hamlin N."/>
            <person name="Harris D.E."/>
            <person name="Hidalgo J."/>
            <person name="Hodgson G."/>
            <person name="Holroyd S."/>
            <person name="Hornsby T."/>
            <person name="Howarth S."/>
            <person name="Huckle E.J."/>
            <person name="Hunt S."/>
            <person name="Jagels K."/>
            <person name="James K.D."/>
            <person name="Jones L."/>
            <person name="Jones M."/>
            <person name="Leather S."/>
            <person name="McDonald S."/>
            <person name="McLean J."/>
            <person name="Mooney P."/>
            <person name="Moule S."/>
            <person name="Mungall K.L."/>
            <person name="Murphy L.D."/>
            <person name="Niblett D."/>
            <person name="Odell C."/>
            <person name="Oliver K."/>
            <person name="O'Neil S."/>
            <person name="Pearson D."/>
            <person name="Quail M.A."/>
            <person name="Rabbinowitsch E."/>
            <person name="Rutherford K.M."/>
            <person name="Rutter S."/>
            <person name="Saunders D."/>
            <person name="Seeger K."/>
            <person name="Sharp S."/>
            <person name="Skelton J."/>
            <person name="Simmonds M.N."/>
            <person name="Squares R."/>
            <person name="Squares S."/>
            <person name="Stevens K."/>
            <person name="Taylor K."/>
            <person name="Taylor R.G."/>
            <person name="Tivey A."/>
            <person name="Walsh S.V."/>
            <person name="Warren T."/>
            <person name="Whitehead S."/>
            <person name="Woodward J.R."/>
            <person name="Volckaert G."/>
            <person name="Aert R."/>
            <person name="Robben J."/>
            <person name="Grymonprez B."/>
            <person name="Weltjens I."/>
            <person name="Vanstreels E."/>
            <person name="Rieger M."/>
            <person name="Schaefer M."/>
            <person name="Mueller-Auer S."/>
            <person name="Gabel C."/>
            <person name="Fuchs M."/>
            <person name="Duesterhoeft A."/>
            <person name="Fritzc C."/>
            <person name="Holzer E."/>
            <person name="Moestl D."/>
            <person name="Hilbert H."/>
            <person name="Borzym K."/>
            <person name="Langer I."/>
            <person name="Beck A."/>
            <person name="Lehrach H."/>
            <person name="Reinhardt R."/>
            <person name="Pohl T.M."/>
            <person name="Eger P."/>
            <person name="Zimmermann W."/>
            <person name="Wedler H."/>
            <person name="Wambutt R."/>
            <person name="Purnelle B."/>
            <person name="Goffeau A."/>
            <person name="Cadieu E."/>
            <person name="Dreano S."/>
            <person name="Gloux S."/>
            <person name="Lelaure V."/>
            <person name="Mottier S."/>
            <person name="Galibert F."/>
            <person name="Aves S.J."/>
            <person name="Xiang Z."/>
            <person name="Hunt C."/>
            <person name="Moore K."/>
            <person name="Hurst S.M."/>
            <person name="Lucas M."/>
            <person name="Rochet M."/>
            <person name="Gaillardin C."/>
            <person name="Tallada V.A."/>
            <person name="Garzon A."/>
            <person name="Thode G."/>
            <person name="Daga R.R."/>
            <person name="Cruzado L."/>
            <person name="Jimenez J."/>
            <person name="Sanchez M."/>
            <person name="del Rey F."/>
            <person name="Benito J."/>
            <person name="Dominguez A."/>
            <person name="Revuelta J.L."/>
            <person name="Moreno S."/>
            <person name="Armstrong J."/>
            <person name="Forsburg S.L."/>
            <person name="Cerutti L."/>
            <person name="Lowe T."/>
            <person name="McCombie W.R."/>
            <person name="Paulsen I."/>
            <person name="Potashkin J."/>
            <person name="Shpakovski G.V."/>
            <person name="Ussery D."/>
            <person name="Barrell B.G."/>
            <person name="Nurse P."/>
        </authorList>
    </citation>
    <scope>NUCLEOTIDE SEQUENCE [LARGE SCALE GENOMIC DNA]</scope>
    <source>
        <strain>972 / ATCC 24843</strain>
    </source>
</reference>
<reference key="2">
    <citation type="journal article" date="2000" name="Genes Cells">
        <title>Large-scale screening of intracellular protein localization in living fission yeast cells by the use of a GFP-fusion genomic DNA library.</title>
        <authorList>
            <person name="Ding D.-Q."/>
            <person name="Tomita Y."/>
            <person name="Yamamoto A."/>
            <person name="Chikashige Y."/>
            <person name="Haraguchi T."/>
            <person name="Hiraoka Y."/>
        </authorList>
    </citation>
    <scope>NUCLEOTIDE SEQUENCE [LARGE SCALE GENOMIC DNA] OF 1-82</scope>
    <scope>SUBCELLULAR LOCATION</scope>
    <source>
        <strain>ATCC 38364 / 968</strain>
    </source>
</reference>
<reference key="3">
    <citation type="journal article" date="2004" name="EMBO J.">
        <title>Prp5 bridges U1 and U2 snRNPs and enables stable U2 snRNP association with intron RNA.</title>
        <authorList>
            <person name="Xu Y.-Z."/>
            <person name="Newnham C.M."/>
            <person name="Kameoka S."/>
            <person name="Huang T."/>
            <person name="Konarska M.M."/>
            <person name="Query C.C."/>
        </authorList>
    </citation>
    <scope>FUNCTION</scope>
    <scope>CATALYTIC ACTIVITY</scope>
    <scope>SUBCELLULAR LOCATION</scope>
    <scope>MUTAGENESIS OF LYS-468; THR-469; ASP-575; GLU-576 AND THR-608</scope>
</reference>
<organism>
    <name type="scientific">Schizosaccharomyces pombe (strain 972 / ATCC 24843)</name>
    <name type="common">Fission yeast</name>
    <dbReference type="NCBI Taxonomy" id="284812"/>
    <lineage>
        <taxon>Eukaryota</taxon>
        <taxon>Fungi</taxon>
        <taxon>Dikarya</taxon>
        <taxon>Ascomycota</taxon>
        <taxon>Taphrinomycotina</taxon>
        <taxon>Schizosaccharomycetes</taxon>
        <taxon>Schizosaccharomycetales</taxon>
        <taxon>Schizosaccharomycetaceae</taxon>
        <taxon>Schizosaccharomyces</taxon>
    </lineage>
</organism>
<feature type="chain" id="PRO_0000055146" description="Pre-mRNA-processing ATP-dependent RNA helicase prp11">
    <location>
        <begin position="1"/>
        <end position="1014"/>
    </location>
</feature>
<feature type="domain" description="Helicase ATP-binding" evidence="1">
    <location>
        <begin position="449"/>
        <end position="627"/>
    </location>
</feature>
<feature type="domain" description="Helicase C-terminal" evidence="2">
    <location>
        <begin position="638"/>
        <end position="802"/>
    </location>
</feature>
<feature type="region of interest" description="Disordered" evidence="3">
    <location>
        <begin position="1"/>
        <end position="149"/>
    </location>
</feature>
<feature type="region of interest" description="Disordered" evidence="3">
    <location>
        <begin position="815"/>
        <end position="875"/>
    </location>
</feature>
<feature type="short sequence motif" description="Q motif">
    <location>
        <begin position="418"/>
        <end position="446"/>
    </location>
</feature>
<feature type="short sequence motif" description="DEAD box">
    <location>
        <begin position="575"/>
        <end position="578"/>
    </location>
</feature>
<feature type="compositionally biased region" description="Basic residues" evidence="3">
    <location>
        <begin position="1"/>
        <end position="11"/>
    </location>
</feature>
<feature type="compositionally biased region" description="Basic and acidic residues" evidence="3">
    <location>
        <begin position="15"/>
        <end position="87"/>
    </location>
</feature>
<feature type="compositionally biased region" description="Basic and acidic residues" evidence="3">
    <location>
        <begin position="106"/>
        <end position="121"/>
    </location>
</feature>
<feature type="compositionally biased region" description="Basic and acidic residues" evidence="3">
    <location>
        <begin position="827"/>
        <end position="838"/>
    </location>
</feature>
<feature type="compositionally biased region" description="Basic and acidic residues" evidence="3">
    <location>
        <begin position="855"/>
        <end position="875"/>
    </location>
</feature>
<feature type="binding site" evidence="1">
    <location>
        <begin position="462"/>
        <end position="469"/>
    </location>
    <ligand>
        <name>ATP</name>
        <dbReference type="ChEBI" id="CHEBI:30616"/>
    </ligand>
</feature>
<feature type="mutagenesis site" description="Decreased ATP binding. Decreased ATP hydrolysis activity. Loss of function in pre-spliceosome/complex A assembly." evidence="4">
    <original>K</original>
    <variation>A</variation>
    <location>
        <position position="468"/>
    </location>
</feature>
<feature type="mutagenesis site" description="Decreased ATP binding. Decreased ATP hydrolysis activity. Loss of function in pre-spliceosome/complex A assembly." evidence="4">
    <original>T</original>
    <variation>A</variation>
    <location>
        <position position="469"/>
    </location>
</feature>
<feature type="mutagenesis site" description="No effect on ATP binding. Loss of ATP hydrolysis activity. Loss of function in pre-spliceosome/complex A assembly." evidence="4">
    <original>D</original>
    <variation>A</variation>
    <location>
        <position position="575"/>
    </location>
</feature>
<feature type="mutagenesis site" description="No effect on ATP binding. Loss of ATP hydrolysis activity. Loss of function in pre-spliceosome/complex A assembly." evidence="4">
    <original>E</original>
    <variation>A</variation>
    <location>
        <position position="576"/>
    </location>
</feature>
<feature type="mutagenesis site" description="No effect on ATP binding. Decreased ATP hydrolysis activity. Loss of function in pre-spliceosome/complex A assembly." evidence="4">
    <original>T</original>
    <variation>A</variation>
    <location>
        <position position="608"/>
    </location>
</feature>
<accession>Q9P7C7</accession>
<accession>Q9UTW0</accession>
<comment type="function">
    <text evidence="4">ATP-dependent RNA helicase involved in pre-spliceosome/complex A assembly and mRNA splicing (PubMed:14713954). Bridges U1 and U2 snRNPs during pre-spliceosome assembly and enables stable U2 snRNP association with intron RNA (PubMed:14713954). Through its helicase activity probably catalyzes an ATP-dependent conformational change of U2 snRNP (PubMed:14713954).</text>
</comment>
<comment type="catalytic activity">
    <reaction evidence="6">
        <text>ATP + H2O = ADP + phosphate + H(+)</text>
        <dbReference type="Rhea" id="RHEA:13065"/>
        <dbReference type="ChEBI" id="CHEBI:15377"/>
        <dbReference type="ChEBI" id="CHEBI:15378"/>
        <dbReference type="ChEBI" id="CHEBI:30616"/>
        <dbReference type="ChEBI" id="CHEBI:43474"/>
        <dbReference type="ChEBI" id="CHEBI:456216"/>
        <dbReference type="EC" id="3.6.4.13"/>
    </reaction>
    <physiologicalReaction direction="left-to-right" evidence="6">
        <dbReference type="Rhea" id="RHEA:13066"/>
    </physiologicalReaction>
</comment>
<comment type="subcellular location">
    <subcellularLocation>
        <location evidence="6">Nucleus</location>
    </subcellularLocation>
</comment>
<comment type="domain">
    <text>The Q motif is unique to and characteristic of the DEAD box family of RNA helicases and controls ATP binding and hydrolysis.</text>
</comment>
<comment type="similarity">
    <text evidence="5">Belongs to the DEAD box helicase family. DDX46/PRP5 subfamily.</text>
</comment>
<gene>
    <name type="primary">prp11</name>
    <name type="ORF">SPCC10H11.01</name>
</gene>